<reference evidence="14" key="1">
    <citation type="submission" date="2003-03" db="EMBL/GenBank/DDBJ databases">
        <title>The complete genome sequence of Neisseria gonorrhoeae.</title>
        <authorList>
            <person name="Lewis L.A."/>
            <person name="Gillaspy A.F."/>
            <person name="McLaughlin R.E."/>
            <person name="Gipson M."/>
            <person name="Ducey T.F."/>
            <person name="Ownbey T."/>
            <person name="Hartman K."/>
            <person name="Nydick C."/>
            <person name="Carson M.B."/>
            <person name="Vaughn J."/>
            <person name="Thomson C."/>
            <person name="Song L."/>
            <person name="Lin S."/>
            <person name="Yuan X."/>
            <person name="Najar F."/>
            <person name="Zhan M."/>
            <person name="Ren Q."/>
            <person name="Zhu H."/>
            <person name="Qi S."/>
            <person name="Kenton S.M."/>
            <person name="Lai H."/>
            <person name="White J.D."/>
            <person name="Clifton S."/>
            <person name="Roe B.A."/>
            <person name="Dyer D.W."/>
        </authorList>
    </citation>
    <scope>NUCLEOTIDE SEQUENCE [LARGE SCALE GENOMIC DNA]</scope>
    <source>
        <strain evidence="14">ATCC 700825 / FA 1090</strain>
    </source>
</reference>
<reference key="2">
    <citation type="journal article" date="2005" name="Mol. Microbiol.">
        <title>The transcriptome response of Neisseria gonorrhoeae to hydrogen peroxide reveals genes with previously uncharacterized roles in oxidative damage protection.</title>
        <authorList>
            <person name="Stohl E.A."/>
            <person name="Criss A.K."/>
            <person name="Seifert H.S."/>
        </authorList>
    </citation>
    <scope>FUNCTION</scope>
    <scope>INDUCTION</scope>
    <scope>DISRUPTION PHENOTYPE</scope>
    <source>
        <strain evidence="7">ATCC 700825 / FA 1090</strain>
    </source>
</reference>
<reference key="3">
    <citation type="journal article" date="2009" name="Cell. Microbiol.">
        <title>Resistance of Neisseria gonorrhoeae to non-oxidative killing by adherent human polymorphonuclear leucocytes.</title>
        <authorList>
            <person name="Criss A.K."/>
            <person name="Katz B.Z."/>
            <person name="Seifert H.S."/>
        </authorList>
    </citation>
    <scope>FUNCTION</scope>
    <scope>DISRUPTION PHENOTYPE</scope>
    <source>
        <strain evidence="8">ATCC 700825 / FA 1090</strain>
    </source>
</reference>
<reference key="4">
    <citation type="journal article" date="2012" name="J. Biol. Chem.">
        <title>Neisseria gonorrhoeae virulence factor NG1686 is a bifunctional M23B family metallopeptidase that influences resistance to hydrogen peroxide and colony morphology.</title>
        <authorList>
            <person name="Stohl E.A."/>
            <person name="Chan Y.A."/>
            <person name="Hackett K.T."/>
            <person name="Kohler P.L."/>
            <person name="Dillard J.P."/>
            <person name="Seifert H.S."/>
        </authorList>
    </citation>
    <scope>FUNCTION</scope>
    <scope>CATALYTIC ACTIVITY</scope>
    <scope>ACTIVITY REGULATION</scope>
    <scope>DISRUPTION PHENOTYPE</scope>
    <scope>MUTAGENESIS OF HIS-295; ASP-299; HIS-373 AND HIS-375</scope>
    <source>
        <strain evidence="9">ATCC 700825 / FA 1090</strain>
    </source>
</reference>
<reference key="5">
    <citation type="journal article" date="2013" name="MBio">
        <title>Neisseria gonorrhoeae metalloprotease NGO1686 is required for full piliation, and piliation is required for resistance to H2O2- and neutrophil-mediated killing.</title>
        <authorList>
            <person name="Stohl E.A."/>
            <person name="Dale E.M."/>
            <person name="Criss A.K."/>
            <person name="Seifert H.S."/>
        </authorList>
    </citation>
    <scope>FUNCTION</scope>
    <scope>DISRUPTION PHENOTYPE</scope>
    <source>
        <strain evidence="10">ATCC 700825 / FA 1090</strain>
    </source>
</reference>
<reference evidence="15" key="6">
    <citation type="submission" date="2018-10" db="PDB data bank">
        <title>1.93 Angstrom Resolution Crystal Structure of Peptidase M23 from Neisseria gonorrhoeae.</title>
        <authorList>
            <consortium name="Center for Structural Genomics of Infectious Diseases (CSGID)"/>
            <person name="Minasov G."/>
            <person name="Shuvalova L."/>
            <person name="Pshenychnyi S."/>
            <person name="Satchell K.J.F."/>
            <person name="Joachimiak A."/>
        </authorList>
    </citation>
    <scope>X-RAY CRYSTALLOGRAPHY (1.93 ANGSTROMS) OF 32-430 IN COMPLEX WITH ZN(2+)</scope>
    <scope>SUBUNIT</scope>
    <source>
        <strain evidence="11">ATCC 700825 / FA 1090</strain>
    </source>
</reference>
<name>MPG_NEIG1</name>
<proteinExistence type="evidence at protein level"/>
<gene>
    <name evidence="10" type="primary">mpg</name>
    <name evidence="13" type="ordered locus">NGO_1686</name>
</gene>
<sequence>MAVFPLSAKHRKYALRALAVSIILVSAAYIASTEGTERVRPQRVEQKLPPLSWGGSGVQTAYWVQEAVQPGDSLADVLARSGMARDEIARITEKYGGEADLRHLRADQSVHVLVGGDGSAREVQFFTDEDGERNLVALEKKGGIWRRSASDADMKVLPTLRSVVVKTSARGSLARAEVPVEIRESLSGIFAGRFSLDGLKEGDAVRLLYDSLYFHGQQVAAGDILAAEVVKGGTTHQAFYYRSDKEGGGGGNYYDEDGRVLQEKGGFNIEPLVYTRISSPFGYRMHPILHTWRLHTGIDYAAPQGTPVRASADGVITFKGRKGGYGNAVMIRHANGVETLYAHLSAFSQAQGNVRGGEVIGFVGSTGRSTGPHLHYEARINGQPVNPVSVALPTPELTQADKAAFAAQKQKADALLARLRGIPVTVSQSD</sequence>
<organism evidence="13 14">
    <name type="scientific">Neisseria gonorrhoeae (strain ATCC 700825 / FA 1090)</name>
    <dbReference type="NCBI Taxonomy" id="242231"/>
    <lineage>
        <taxon>Bacteria</taxon>
        <taxon>Pseudomonadati</taxon>
        <taxon>Pseudomonadota</taxon>
        <taxon>Betaproteobacteria</taxon>
        <taxon>Neisseriales</taxon>
        <taxon>Neisseriaceae</taxon>
        <taxon>Neisseria</taxon>
    </lineage>
</organism>
<evidence type="ECO:0000250" key="1">
    <source>
        <dbReference type="UniProtKB" id="E0N688"/>
    </source>
</evidence>
<evidence type="ECO:0000269" key="2">
    <source>
    </source>
</evidence>
<evidence type="ECO:0000269" key="3">
    <source>
    </source>
</evidence>
<evidence type="ECO:0000269" key="4">
    <source>
    </source>
</evidence>
<evidence type="ECO:0000269" key="5">
    <source>
    </source>
</evidence>
<evidence type="ECO:0000269" key="6">
    <source ref="6"/>
</evidence>
<evidence type="ECO:0000303" key="7">
    <source>
    </source>
</evidence>
<evidence type="ECO:0000303" key="8">
    <source>
    </source>
</evidence>
<evidence type="ECO:0000303" key="9">
    <source>
    </source>
</evidence>
<evidence type="ECO:0000303" key="10">
    <source>
    </source>
</evidence>
<evidence type="ECO:0000303" key="11">
    <source ref="6"/>
</evidence>
<evidence type="ECO:0000305" key="12"/>
<evidence type="ECO:0000312" key="13">
    <source>
        <dbReference type="EMBL" id="AAW90311.1"/>
    </source>
</evidence>
<evidence type="ECO:0000312" key="14">
    <source>
        <dbReference type="Proteomes" id="UP000000535"/>
    </source>
</evidence>
<evidence type="ECO:0007744" key="15">
    <source>
        <dbReference type="PDB" id="6MUK"/>
    </source>
</evidence>
<evidence type="ECO:0007829" key="16">
    <source>
        <dbReference type="PDB" id="6MUK"/>
    </source>
</evidence>
<feature type="propeptide" id="PRO_0000461672" description="Removed in mature form" evidence="1">
    <location>
        <begin position="1"/>
        <end status="unknown"/>
    </location>
</feature>
<feature type="chain" id="PRO_0000461562" description="DD-carboxypeptidase/endopeptidase Mpg">
    <location>
        <begin status="unknown"/>
        <end position="430"/>
    </location>
</feature>
<feature type="binding site" evidence="6 15">
    <location>
        <position position="295"/>
    </location>
    <ligand>
        <name>Zn(2+)</name>
        <dbReference type="ChEBI" id="CHEBI:29105"/>
        <note>catalytic</note>
    </ligand>
</feature>
<feature type="binding site" evidence="6 15">
    <location>
        <position position="299"/>
    </location>
    <ligand>
        <name>Zn(2+)</name>
        <dbReference type="ChEBI" id="CHEBI:29105"/>
        <note>catalytic</note>
    </ligand>
</feature>
<feature type="binding site" evidence="6 15">
    <location>
        <position position="375"/>
    </location>
    <ligand>
        <name>Zn(2+)</name>
        <dbReference type="ChEBI" id="CHEBI:29105"/>
        <note>catalytic</note>
    </ligand>
</feature>
<feature type="mutagenesis site" description="No effect on colony morphology nor sensitivity to H(2)O(2), but reduced peptidoglycan (PG) degradation. Altered colony morphology, increased sensitivity to H(2)O(2) and loss of peptidoglycan (PG) degradation; when associated with A-299." evidence="4">
    <original>H</original>
    <variation>A</variation>
    <location>
        <position position="295"/>
    </location>
</feature>
<feature type="mutagenesis site" description="Altered colony morphology, increased sensitivity to H(2)O(2) and loss of peptidoglycan (PG) degradation. Altered colony morphology, increased sensitivity to H(2)O(2) and loss of peptidoglycan (PG) degradation; when associated with A-295." evidence="4">
    <original>D</original>
    <variation>A</variation>
    <location>
        <position position="299"/>
    </location>
</feature>
<feature type="mutagenesis site" description="No effect on colony morphology nor sensitivity to H(2)O(2), but reduced peptidoglycan (PG) degradation. Altered colony morphology, increased sensitivity to H(2)O(2) and loss of peptidoglycan (PG) degradation; when associated with A-375." evidence="4">
    <original>H</original>
    <variation>A</variation>
    <location>
        <position position="373"/>
    </location>
</feature>
<feature type="mutagenesis site" description="Altered colony morphology, increased sensitivity to H(2)O(2) and dramatically reduced peptidoglycan (PG) degradation. Altered colony morphology, increased sensitivity to H(2)O(2) and loss of peptidoglycan (PG) degradation; when associated with A-373." evidence="4">
    <original>H</original>
    <variation>A</variation>
    <location>
        <position position="375"/>
    </location>
</feature>
<feature type="strand" evidence="16">
    <location>
        <begin position="62"/>
        <end position="67"/>
    </location>
</feature>
<feature type="helix" evidence="16">
    <location>
        <begin position="74"/>
        <end position="80"/>
    </location>
</feature>
<feature type="helix" evidence="16">
    <location>
        <begin position="85"/>
        <end position="95"/>
    </location>
</feature>
<feature type="turn" evidence="16">
    <location>
        <begin position="96"/>
        <end position="98"/>
    </location>
</feature>
<feature type="strand" evidence="16">
    <location>
        <begin position="106"/>
        <end position="114"/>
    </location>
</feature>
<feature type="strand" evidence="16">
    <location>
        <begin position="116"/>
        <end position="118"/>
    </location>
</feature>
<feature type="strand" evidence="16">
    <location>
        <begin position="120"/>
        <end position="129"/>
    </location>
</feature>
<feature type="strand" evidence="16">
    <location>
        <begin position="132"/>
        <end position="141"/>
    </location>
</feature>
<feature type="strand" evidence="16">
    <location>
        <begin position="144"/>
        <end position="147"/>
    </location>
</feature>
<feature type="strand" evidence="16">
    <location>
        <begin position="153"/>
        <end position="164"/>
    </location>
</feature>
<feature type="helix" evidence="16">
    <location>
        <begin position="169"/>
        <end position="175"/>
    </location>
</feature>
<feature type="helix" evidence="16">
    <location>
        <begin position="180"/>
        <end position="190"/>
    </location>
</feature>
<feature type="turn" evidence="16">
    <location>
        <begin position="191"/>
        <end position="193"/>
    </location>
</feature>
<feature type="helix" evidence="16">
    <location>
        <begin position="196"/>
        <end position="198"/>
    </location>
</feature>
<feature type="strand" evidence="16">
    <location>
        <begin position="204"/>
        <end position="214"/>
    </location>
</feature>
<feature type="strand" evidence="16">
    <location>
        <begin position="217"/>
        <end position="231"/>
    </location>
</feature>
<feature type="strand" evidence="16">
    <location>
        <begin position="234"/>
        <end position="241"/>
    </location>
</feature>
<feature type="strand" evidence="16">
    <location>
        <begin position="252"/>
        <end position="254"/>
    </location>
</feature>
<feature type="strand" evidence="16">
    <location>
        <begin position="264"/>
        <end position="267"/>
    </location>
</feature>
<feature type="strand" evidence="16">
    <location>
        <begin position="275"/>
        <end position="279"/>
    </location>
</feature>
<feature type="strand" evidence="16">
    <location>
        <begin position="281"/>
        <end position="285"/>
    </location>
</feature>
<feature type="turn" evidence="16">
    <location>
        <begin position="287"/>
        <end position="289"/>
    </location>
</feature>
<feature type="strand" evidence="16">
    <location>
        <begin position="292"/>
        <end position="295"/>
    </location>
</feature>
<feature type="strand" evidence="16">
    <location>
        <begin position="297"/>
        <end position="301"/>
    </location>
</feature>
<feature type="strand" evidence="16">
    <location>
        <begin position="307"/>
        <end position="309"/>
    </location>
</feature>
<feature type="strand" evidence="16">
    <location>
        <begin position="311"/>
        <end position="321"/>
    </location>
</feature>
<feature type="helix" evidence="16">
    <location>
        <begin position="323"/>
        <end position="325"/>
    </location>
</feature>
<feature type="strand" evidence="16">
    <location>
        <begin position="327"/>
        <end position="332"/>
    </location>
</feature>
<feature type="strand" evidence="16">
    <location>
        <begin position="337"/>
        <end position="347"/>
    </location>
</feature>
<feature type="strand" evidence="16">
    <location>
        <begin position="352"/>
        <end position="354"/>
    </location>
</feature>
<feature type="strand" evidence="16">
    <location>
        <begin position="359"/>
        <end position="362"/>
    </location>
</feature>
<feature type="strand" evidence="16">
    <location>
        <begin position="373"/>
        <end position="380"/>
    </location>
</feature>
<feature type="strand" evidence="16">
    <location>
        <begin position="383"/>
        <end position="385"/>
    </location>
</feature>
<feature type="turn" evidence="16">
    <location>
        <begin position="388"/>
        <end position="390"/>
    </location>
</feature>
<feature type="helix" evidence="16">
    <location>
        <begin position="399"/>
        <end position="420"/>
    </location>
</feature>
<protein>
    <recommendedName>
        <fullName evidence="12">DD-carboxypeptidase/endopeptidase Mpg</fullName>
        <ecNumber evidence="4">3.4.17.-</ecNumber>
        <ecNumber evidence="4">3.4.24.-</ecNumber>
    </recommendedName>
    <alternativeName>
        <fullName evidence="10">Metalloprotease NGO1686</fullName>
    </alternativeName>
    <alternativeName>
        <fullName evidence="10">Metalloprotease active against peptidoglycan</fullName>
    </alternativeName>
    <alternativeName>
        <fullName evidence="12">Outer membrane protein</fullName>
        <shortName evidence="12">OMP</shortName>
    </alternativeName>
    <alternativeName>
        <fullName evidence="9">Virulence factor NG1686</fullName>
    </alternativeName>
    <alternativeName>
        <fullName evidence="9 10">Zinc metallopeptidase</fullName>
    </alternativeName>
    <alternativeName>
        <fullName evidence="7">Zinc metalloprotease</fullName>
    </alternativeName>
    <alternativeName>
        <fullName evidence="12">Zinc-dependent metallopeptidase</fullName>
    </alternativeName>
</protein>
<accession>Q5F676</accession>
<keyword id="KW-0002">3D-structure</keyword>
<keyword id="KW-0998">Cell outer membrane</keyword>
<keyword id="KW-0961">Cell wall biogenesis/degradation</keyword>
<keyword id="KW-1029">Fimbrium biogenesis</keyword>
<keyword id="KW-0378">Hydrolase</keyword>
<keyword id="KW-0472">Membrane</keyword>
<keyword id="KW-0479">Metal-binding</keyword>
<keyword id="KW-0482">Metalloprotease</keyword>
<keyword id="KW-0645">Protease</keyword>
<keyword id="KW-1185">Reference proteome</keyword>
<keyword id="KW-0862">Zinc</keyword>
<keyword id="KW-0865">Zymogen</keyword>
<dbReference type="EC" id="3.4.17.-" evidence="4"/>
<dbReference type="EC" id="3.4.24.-" evidence="4"/>
<dbReference type="EMBL" id="AE004969">
    <property type="protein sequence ID" value="AAW90311.1"/>
    <property type="molecule type" value="Genomic_DNA"/>
</dbReference>
<dbReference type="RefSeq" id="WP_003689841.1">
    <property type="nucleotide sequence ID" value="NC_002946.2"/>
</dbReference>
<dbReference type="RefSeq" id="YP_208723.1">
    <property type="nucleotide sequence ID" value="NC_002946.2"/>
</dbReference>
<dbReference type="PDB" id="6MUK">
    <property type="method" value="X-ray"/>
    <property type="resolution" value="1.93 A"/>
    <property type="chains" value="A=32-430"/>
</dbReference>
<dbReference type="PDBsum" id="6MUK"/>
<dbReference type="SMR" id="Q5F676"/>
<dbReference type="STRING" id="242231.NGO_1686"/>
<dbReference type="MEROPS" id="M23.009"/>
<dbReference type="KEGG" id="ngo:NGO_1686"/>
<dbReference type="PATRIC" id="fig|242231.10.peg.2009"/>
<dbReference type="HOGENOM" id="CLU_026846_4_1_4"/>
<dbReference type="Proteomes" id="UP000000535">
    <property type="component" value="Chromosome"/>
</dbReference>
<dbReference type="GO" id="GO:0009279">
    <property type="term" value="C:cell outer membrane"/>
    <property type="evidence" value="ECO:0007669"/>
    <property type="project" value="UniProtKB-SubCell"/>
</dbReference>
<dbReference type="GO" id="GO:0046872">
    <property type="term" value="F:metal ion binding"/>
    <property type="evidence" value="ECO:0007669"/>
    <property type="project" value="UniProtKB-KW"/>
</dbReference>
<dbReference type="GO" id="GO:0004222">
    <property type="term" value="F:metalloendopeptidase activity"/>
    <property type="evidence" value="ECO:0007669"/>
    <property type="project" value="TreeGrafter"/>
</dbReference>
<dbReference type="GO" id="GO:0071555">
    <property type="term" value="P:cell wall organization"/>
    <property type="evidence" value="ECO:0007669"/>
    <property type="project" value="UniProtKB-KW"/>
</dbReference>
<dbReference type="GO" id="GO:0006508">
    <property type="term" value="P:proteolysis"/>
    <property type="evidence" value="ECO:0007669"/>
    <property type="project" value="UniProtKB-KW"/>
</dbReference>
<dbReference type="CDD" id="cd12797">
    <property type="entry name" value="M23_peptidase"/>
    <property type="match status" value="1"/>
</dbReference>
<dbReference type="FunFam" id="2.70.70.10:FF:000002">
    <property type="entry name" value="Murein DD-endopeptidase MepM"/>
    <property type="match status" value="1"/>
</dbReference>
<dbReference type="Gene3D" id="3.10.450.350">
    <property type="match status" value="2"/>
</dbReference>
<dbReference type="Gene3D" id="2.70.70.10">
    <property type="entry name" value="Glucose Permease (Domain IIA)"/>
    <property type="match status" value="1"/>
</dbReference>
<dbReference type="InterPro" id="IPR050570">
    <property type="entry name" value="Cell_wall_metabolism_enzyme"/>
</dbReference>
<dbReference type="InterPro" id="IPR011055">
    <property type="entry name" value="Dup_hybrid_motif"/>
</dbReference>
<dbReference type="InterPro" id="IPR054512">
    <property type="entry name" value="NMB0315-like_N"/>
</dbReference>
<dbReference type="InterPro" id="IPR016047">
    <property type="entry name" value="Peptidase_M23"/>
</dbReference>
<dbReference type="PANTHER" id="PTHR21666:SF288">
    <property type="entry name" value="CELL DIVISION PROTEIN YTFB"/>
    <property type="match status" value="1"/>
</dbReference>
<dbReference type="PANTHER" id="PTHR21666">
    <property type="entry name" value="PEPTIDASE-RELATED"/>
    <property type="match status" value="1"/>
</dbReference>
<dbReference type="Pfam" id="PF22310">
    <property type="entry name" value="NMB0315_dom_I"/>
    <property type="match status" value="1"/>
</dbReference>
<dbReference type="Pfam" id="PF01551">
    <property type="entry name" value="Peptidase_M23"/>
    <property type="match status" value="1"/>
</dbReference>
<dbReference type="SUPFAM" id="SSF51261">
    <property type="entry name" value="Duplicated hybrid motif"/>
    <property type="match status" value="1"/>
</dbReference>
<comment type="function">
    <text evidence="2 3 4 5">Has both endopeptidase and DD-carboxypeptidase activities (PubMed:22334697). Degrades cell wall peptidoglycan (PG) to allow consummate expression of pili (PubMed:23839218). Degrades N.gonorrhoeae and E.coli PG side chains in vitro (PubMed:22334697). Required for proper piliation, which in turn is required for normal colony morphology, resistance to H(2)O(2) damage and defense against killing by human polymorphonuclear leukocytes (PMNs) (PubMed:23839218). Involved in type IV pilus biogenesis (PubMed:23839218). Involved in resistance against non-oxidative killing by adherent CXCL8/IL8-primed human PMNs (PubMed:19290914). Protects from killing by PMN-produced antimicrobial factors, which kill by a mechanism completely independent of reactive oxygen species (ROS) production of the PMNs (PubMed:19290914). Provides protection against oxidative damage caused by peroxides H(2)O(2) and cumene hydroperoxide in vitro (PubMed:16194237).</text>
</comment>
<comment type="cofactor">
    <cofactor evidence="1">
        <name>Zn(2+)</name>
        <dbReference type="ChEBI" id="CHEBI:29105"/>
    </cofactor>
    <text evidence="1">Binds 1 zinc ion per subunit.</text>
</comment>
<comment type="activity regulation">
    <text evidence="4">Peptidoglycan (PG) degradation activity is completely inhibited by zinc chelating EDTA and phenanthroline.</text>
</comment>
<comment type="subunit">
    <text evidence="6">Monomer.</text>
</comment>
<comment type="subcellular location">
    <subcellularLocation>
        <location evidence="1">Cell outer membrane</location>
    </subcellularLocation>
    <text evidence="1 12">There is a signal or a transmembrane region in the N-terminus of the pre-protein (Probable). Mature protein is probably associated with the cell outer membrane (By similarity).</text>
</comment>
<comment type="induction">
    <text evidence="2">Expression is up-regulated in response to transient exposure to H(2)O(2).</text>
</comment>
<comment type="PTM">
    <text evidence="1">Likely to be synthesized as a proenzyme. The cleavage of the N-terminal domain is probably required for the activation of the enzyme.</text>
</comment>
<comment type="disruption phenotype">
    <text evidence="2 3 4 5">Altered colony morphology, but not cell morphology (PubMed:22334697, PubMed:23839218). Decreased type IV pili expression (PubMed:23839218). Deficiency in natural transformation (PubMed:23839218). No sensitivity to cell wall targeting antibiotics (PubMed:22334697). Susceptibility to killing by human polymorphonuclear leukocytes (PMNs) (PubMed:16194237, PubMed:19290914, PubMed:22334697, PubMed:23839218). Increased sensitivity to PMN-produced cationic antimicrobial peptide LL-37 (PubMed:23839218). Increased sensitivity to reactive oxygen species (ROS), however, the survival of the bacterial cells is not rescued in PMNs defective in producing ROS (PubMed:19290914). Survives as wild-type in PMNs deficient in production of reactive nitrogen species (RNS) (PubMed:19290914). Increased sensitivity particularly to extracellular mechanisms of PMN killing as internalized mutant bacteria are not more sensitive than wild-type to intracellular PMN killing (PubMed:19290914). Increased sensitivity to H(2)O(2) (PubMed:16194237, PubMed:22334697, PubMed:23839218).</text>
</comment>
<comment type="similarity">
    <text evidence="7 9 10">Belongs to the peptidase M23B family.</text>
</comment>